<feature type="signal peptide" evidence="1">
    <location>
        <begin position="1"/>
        <end position="21"/>
    </location>
</feature>
<feature type="propeptide" id="PRO_0000435062" evidence="3">
    <location>
        <begin position="22"/>
        <end position="60"/>
    </location>
</feature>
<feature type="chain" id="PRO_0000435063" description="Teretoxin Tan6.14">
    <location>
        <begin position="61"/>
        <end position="96"/>
    </location>
</feature>
<accession>P0DN48</accession>
<dbReference type="GO" id="GO:0005576">
    <property type="term" value="C:extracellular region"/>
    <property type="evidence" value="ECO:0007669"/>
    <property type="project" value="UniProtKB-SubCell"/>
</dbReference>
<dbReference type="GO" id="GO:0090729">
    <property type="term" value="F:toxin activity"/>
    <property type="evidence" value="ECO:0007669"/>
    <property type="project" value="UniProtKB-KW"/>
</dbReference>
<reference key="1">
    <citation type="journal article" date="2015" name="Genome Biol. Evol.">
        <title>Molecular diversity and gene evolution of the venom arsenal of Terebridae predatory marine snails.</title>
        <authorList>
            <person name="Gorson J."/>
            <person name="Ramrattan G."/>
            <person name="Verdes A."/>
            <person name="Wright E.M."/>
            <person name="Kantor Y."/>
            <person name="Rajaram Srinivasan R."/>
            <person name="Musunuri R."/>
            <person name="Packer D."/>
            <person name="Albano G."/>
            <person name="Qiu W.G."/>
            <person name="Holford M."/>
        </authorList>
    </citation>
    <scope>NUCLEOTIDE SEQUENCE [MRNA]</scope>
    <source>
        <tissue>Venom duct</tissue>
    </source>
</reference>
<sequence length="96" mass="10526">MRPLLVFVLMVSVSLAFSLEGMPNNGGDSVASITANQARRFKRNPLFSFAQHSLVDLKARACPYYCSSQIRCCLGFKCKDVDGTLKCVSKGDFLGK</sequence>
<comment type="subcellular location">
    <subcellularLocation>
        <location evidence="4">Secreted</location>
    </subcellularLocation>
</comment>
<comment type="tissue specificity">
    <text evidence="4">Expressed by the venom duct.</text>
</comment>
<comment type="domain">
    <text evidence="3">The cysteine framework is VI/VII (C-C-CC-C-C). Has the PXY motif between the first and the second Cys residues.</text>
</comment>
<comment type="PTM">
    <text evidence="3">Contains 3 disulfide bonds.</text>
</comment>
<evidence type="ECO:0000255" key="1"/>
<evidence type="ECO:0000303" key="2">
    <source>
    </source>
</evidence>
<evidence type="ECO:0000305" key="3"/>
<evidence type="ECO:0000305" key="4">
    <source>
    </source>
</evidence>
<proteinExistence type="inferred from homology"/>
<organism>
    <name type="scientific">Terebra anilis</name>
    <name type="common">Auger snail</name>
    <name type="synonym">Cinguloterebra anilis</name>
    <dbReference type="NCBI Taxonomy" id="553697"/>
    <lineage>
        <taxon>Eukaryota</taxon>
        <taxon>Metazoa</taxon>
        <taxon>Spiralia</taxon>
        <taxon>Lophotrochozoa</taxon>
        <taxon>Mollusca</taxon>
        <taxon>Gastropoda</taxon>
        <taxon>Caenogastropoda</taxon>
        <taxon>Neogastropoda</taxon>
        <taxon>Conoidea</taxon>
        <taxon>Terebridae</taxon>
        <taxon>Terebra</taxon>
    </lineage>
</organism>
<keyword id="KW-0165">Cleavage on pair of basic residues</keyword>
<keyword id="KW-1015">Disulfide bond</keyword>
<keyword id="KW-0964">Secreted</keyword>
<keyword id="KW-0732">Signal</keyword>
<keyword id="KW-0800">Toxin</keyword>
<name>T6E_TERAN</name>
<protein>
    <recommendedName>
        <fullName evidence="2">Teretoxin Tan6.14</fullName>
    </recommendedName>
</protein>